<name>SYSM_YEAST</name>
<comment type="function">
    <text evidence="1">Catalyzes the attachment of serine to tRNA(Ser) (By similarity).</text>
</comment>
<comment type="catalytic activity">
    <reaction evidence="1">
        <text>tRNA(Ser) + L-serine + ATP = L-seryl-tRNA(Ser) + AMP + diphosphate + H(+)</text>
        <dbReference type="Rhea" id="RHEA:12292"/>
        <dbReference type="Rhea" id="RHEA-COMP:9669"/>
        <dbReference type="Rhea" id="RHEA-COMP:9703"/>
        <dbReference type="ChEBI" id="CHEBI:15378"/>
        <dbReference type="ChEBI" id="CHEBI:30616"/>
        <dbReference type="ChEBI" id="CHEBI:33019"/>
        <dbReference type="ChEBI" id="CHEBI:33384"/>
        <dbReference type="ChEBI" id="CHEBI:78442"/>
        <dbReference type="ChEBI" id="CHEBI:78533"/>
        <dbReference type="ChEBI" id="CHEBI:456215"/>
        <dbReference type="EC" id="6.1.1.11"/>
    </reaction>
</comment>
<comment type="subunit">
    <text evidence="1">Homodimer. The tRNA molecule binds across the dimer (By similarity).</text>
</comment>
<comment type="subcellular location">
    <subcellularLocation>
        <location evidence="2">Mitochondrion matrix</location>
    </subcellularLocation>
</comment>
<comment type="domain">
    <text evidence="1">Consists of two distinct domains, a catalytic core and a N-terminal extension that is involved in tRNA binding.</text>
</comment>
<comment type="miscellaneous">
    <text evidence="3">Present with 405 molecules/cell in log phase SD medium.</text>
</comment>
<comment type="similarity">
    <text evidence="4">Belongs to the class-II aminoacyl-tRNA synthetase family. Type-1 seryl-tRNA synthetase subfamily.</text>
</comment>
<comment type="caution">
    <text evidence="4">Although this enzyme participates in the selenocysteinyl-tRNA(Sec) biosynthesis pathway in many taxa, this pathway has been shown in PubMed:30742068 to be lost in dikarya.</text>
</comment>
<accession>P38705</accession>
<accession>D3DKV6</accession>
<gene>
    <name type="primary">DIA4</name>
    <name type="ordered locus">YHR011W</name>
</gene>
<keyword id="KW-0030">Aminoacyl-tRNA synthetase</keyword>
<keyword id="KW-0067">ATP-binding</keyword>
<keyword id="KW-0436">Ligase</keyword>
<keyword id="KW-0496">Mitochondrion</keyword>
<keyword id="KW-0547">Nucleotide-binding</keyword>
<keyword id="KW-0648">Protein biosynthesis</keyword>
<keyword id="KW-1185">Reference proteome</keyword>
<evidence type="ECO:0000250" key="1">
    <source>
        <dbReference type="UniProtKB" id="Q9N0F3"/>
    </source>
</evidence>
<evidence type="ECO:0000269" key="2">
    <source>
    </source>
</evidence>
<evidence type="ECO:0000269" key="3">
    <source>
    </source>
</evidence>
<evidence type="ECO:0000305" key="4"/>
<dbReference type="EC" id="6.1.1.11" evidence="1"/>
<dbReference type="EMBL" id="U10400">
    <property type="protein sequence ID" value="AAB68940.1"/>
    <property type="molecule type" value="Genomic_DNA"/>
</dbReference>
<dbReference type="EMBL" id="AY558105">
    <property type="protein sequence ID" value="AAS56431.1"/>
    <property type="molecule type" value="Genomic_DNA"/>
</dbReference>
<dbReference type="EMBL" id="BK006934">
    <property type="protein sequence ID" value="DAA06700.1"/>
    <property type="molecule type" value="Genomic_DNA"/>
</dbReference>
<dbReference type="PIR" id="S46786">
    <property type="entry name" value="S46786"/>
</dbReference>
<dbReference type="RefSeq" id="NP_011875.1">
    <property type="nucleotide sequence ID" value="NM_001179141.1"/>
</dbReference>
<dbReference type="SMR" id="P38705"/>
<dbReference type="BioGRID" id="36438">
    <property type="interactions" value="122"/>
</dbReference>
<dbReference type="DIP" id="DIP-5573N"/>
<dbReference type="FunCoup" id="P38705">
    <property type="interactions" value="1047"/>
</dbReference>
<dbReference type="IntAct" id="P38705">
    <property type="interactions" value="6"/>
</dbReference>
<dbReference type="MINT" id="P38705"/>
<dbReference type="STRING" id="4932.YHR011W"/>
<dbReference type="PaxDb" id="4932-YHR011W"/>
<dbReference type="PeptideAtlas" id="P38705"/>
<dbReference type="EnsemblFungi" id="YHR011W_mRNA">
    <property type="protein sequence ID" value="YHR011W"/>
    <property type="gene ID" value="YHR011W"/>
</dbReference>
<dbReference type="GeneID" id="856402"/>
<dbReference type="KEGG" id="sce:YHR011W"/>
<dbReference type="AGR" id="SGD:S000001053"/>
<dbReference type="SGD" id="S000001053">
    <property type="gene designation" value="DIA4"/>
</dbReference>
<dbReference type="VEuPathDB" id="FungiDB:YHR011W"/>
<dbReference type="eggNOG" id="KOG2509">
    <property type="taxonomic scope" value="Eukaryota"/>
</dbReference>
<dbReference type="GeneTree" id="ENSGT00940000153792"/>
<dbReference type="HOGENOM" id="CLU_023797_4_3_1"/>
<dbReference type="InParanoid" id="P38705"/>
<dbReference type="OMA" id="EQNCIDR"/>
<dbReference type="OrthoDB" id="10264585at2759"/>
<dbReference type="BioCyc" id="YEAST:G3O-31074-MONOMER"/>
<dbReference type="BioGRID-ORCS" id="856402">
    <property type="hits" value="3 hits in 10 CRISPR screens"/>
</dbReference>
<dbReference type="PRO" id="PR:P38705"/>
<dbReference type="Proteomes" id="UP000002311">
    <property type="component" value="Chromosome VIII"/>
</dbReference>
<dbReference type="RNAct" id="P38705">
    <property type="molecule type" value="protein"/>
</dbReference>
<dbReference type="GO" id="GO:0005737">
    <property type="term" value="C:cytoplasm"/>
    <property type="evidence" value="ECO:0007005"/>
    <property type="project" value="SGD"/>
</dbReference>
<dbReference type="GO" id="GO:0005829">
    <property type="term" value="C:cytosol"/>
    <property type="evidence" value="ECO:0000318"/>
    <property type="project" value="GO_Central"/>
</dbReference>
<dbReference type="GO" id="GO:0005759">
    <property type="term" value="C:mitochondrial matrix"/>
    <property type="evidence" value="ECO:0007669"/>
    <property type="project" value="UniProtKB-SubCell"/>
</dbReference>
<dbReference type="GO" id="GO:0005739">
    <property type="term" value="C:mitochondrion"/>
    <property type="evidence" value="ECO:0000315"/>
    <property type="project" value="SGD"/>
</dbReference>
<dbReference type="GO" id="GO:0005524">
    <property type="term" value="F:ATP binding"/>
    <property type="evidence" value="ECO:0007669"/>
    <property type="project" value="UniProtKB-KW"/>
</dbReference>
<dbReference type="GO" id="GO:0004828">
    <property type="term" value="F:serine-tRNA ligase activity"/>
    <property type="evidence" value="ECO:0000316"/>
    <property type="project" value="SGD"/>
</dbReference>
<dbReference type="GO" id="GO:0000049">
    <property type="term" value="F:tRNA binding"/>
    <property type="evidence" value="ECO:0000318"/>
    <property type="project" value="GO_Central"/>
</dbReference>
<dbReference type="GO" id="GO:0070158">
    <property type="term" value="P:mitochondrial seryl-tRNA aminoacylation"/>
    <property type="evidence" value="ECO:0000316"/>
    <property type="project" value="SGD"/>
</dbReference>
<dbReference type="CDD" id="cd00770">
    <property type="entry name" value="SerRS_core"/>
    <property type="match status" value="1"/>
</dbReference>
<dbReference type="FunFam" id="3.30.930.10:FF:000069">
    <property type="entry name" value="Seryl-tRNA synthetase"/>
    <property type="match status" value="1"/>
</dbReference>
<dbReference type="Gene3D" id="3.30.930.10">
    <property type="entry name" value="Bira Bifunctional Protein, Domain 2"/>
    <property type="match status" value="1"/>
</dbReference>
<dbReference type="InterPro" id="IPR002314">
    <property type="entry name" value="aa-tRNA-synt_IIb"/>
</dbReference>
<dbReference type="InterPro" id="IPR006195">
    <property type="entry name" value="aa-tRNA-synth_II"/>
</dbReference>
<dbReference type="InterPro" id="IPR045864">
    <property type="entry name" value="aa-tRNA-synth_II/BPL/LPL"/>
</dbReference>
<dbReference type="InterPro" id="IPR002317">
    <property type="entry name" value="Ser-tRNA-ligase_type_1"/>
</dbReference>
<dbReference type="InterPro" id="IPR033729">
    <property type="entry name" value="SerRS_core"/>
</dbReference>
<dbReference type="InterPro" id="IPR010978">
    <property type="entry name" value="tRNA-bd_arm"/>
</dbReference>
<dbReference type="NCBIfam" id="TIGR00414">
    <property type="entry name" value="serS"/>
    <property type="match status" value="1"/>
</dbReference>
<dbReference type="PANTHER" id="PTHR11778">
    <property type="entry name" value="SERYL-TRNA SYNTHETASE"/>
    <property type="match status" value="1"/>
</dbReference>
<dbReference type="Pfam" id="PF00587">
    <property type="entry name" value="tRNA-synt_2b"/>
    <property type="match status" value="1"/>
</dbReference>
<dbReference type="PIRSF" id="PIRSF001529">
    <property type="entry name" value="Ser-tRNA-synth_IIa"/>
    <property type="match status" value="1"/>
</dbReference>
<dbReference type="PRINTS" id="PR00981">
    <property type="entry name" value="TRNASYNTHSER"/>
</dbReference>
<dbReference type="SUPFAM" id="SSF55681">
    <property type="entry name" value="Class II aaRS and biotin synthetases"/>
    <property type="match status" value="1"/>
</dbReference>
<dbReference type="SUPFAM" id="SSF46589">
    <property type="entry name" value="tRNA-binding arm"/>
    <property type="match status" value="1"/>
</dbReference>
<dbReference type="PROSITE" id="PS50862">
    <property type="entry name" value="AA_TRNA_LIGASE_II"/>
    <property type="match status" value="1"/>
</dbReference>
<feature type="chain" id="PRO_0000122200" description="Serine--tRNA ligase, mitochondrial">
    <location>
        <begin position="1"/>
        <end position="446"/>
    </location>
</feature>
<feature type="binding site" evidence="1">
    <location>
        <begin position="251"/>
        <end position="253"/>
    </location>
    <ligand>
        <name>L-serine</name>
        <dbReference type="ChEBI" id="CHEBI:33384"/>
    </ligand>
</feature>
<feature type="binding site" evidence="1">
    <location>
        <begin position="284"/>
        <end position="286"/>
    </location>
    <ligand>
        <name>ATP</name>
        <dbReference type="ChEBI" id="CHEBI:30616"/>
    </ligand>
</feature>
<feature type="binding site" evidence="1">
    <location>
        <position position="300"/>
    </location>
    <ligand>
        <name>ATP</name>
        <dbReference type="ChEBI" id="CHEBI:30616"/>
    </ligand>
</feature>
<feature type="binding site" evidence="1">
    <location>
        <position position="307"/>
    </location>
    <ligand>
        <name>L-serine</name>
        <dbReference type="ChEBI" id="CHEBI:33384"/>
    </ligand>
</feature>
<feature type="binding site" evidence="1">
    <location>
        <begin position="371"/>
        <end position="374"/>
    </location>
    <ligand>
        <name>ATP</name>
        <dbReference type="ChEBI" id="CHEBI:30616"/>
    </ligand>
</feature>
<feature type="binding site" evidence="1">
    <location>
        <position position="407"/>
    </location>
    <ligand>
        <name>L-serine</name>
        <dbReference type="ChEBI" id="CHEBI:33384"/>
    </ligand>
</feature>
<proteinExistence type="evidence at protein level"/>
<reference key="1">
    <citation type="journal article" date="1994" name="Science">
        <title>Complete nucleotide sequence of Saccharomyces cerevisiae chromosome VIII.</title>
        <authorList>
            <person name="Johnston M."/>
            <person name="Andrews S."/>
            <person name="Brinkman R."/>
            <person name="Cooper J."/>
            <person name="Ding H."/>
            <person name="Dover J."/>
            <person name="Du Z."/>
            <person name="Favello A."/>
            <person name="Fulton L."/>
            <person name="Gattung S."/>
            <person name="Geisel C."/>
            <person name="Kirsten J."/>
            <person name="Kucaba T."/>
            <person name="Hillier L.W."/>
            <person name="Jier M."/>
            <person name="Johnston L."/>
            <person name="Langston Y."/>
            <person name="Latreille P."/>
            <person name="Louis E.J."/>
            <person name="Macri C."/>
            <person name="Mardis E."/>
            <person name="Menezes S."/>
            <person name="Mouser L."/>
            <person name="Nhan M."/>
            <person name="Rifkin L."/>
            <person name="Riles L."/>
            <person name="St Peter H."/>
            <person name="Trevaskis E."/>
            <person name="Vaughan K."/>
            <person name="Vignati D."/>
            <person name="Wilcox L."/>
            <person name="Wohldman P."/>
            <person name="Waterston R."/>
            <person name="Wilson R."/>
            <person name="Vaudin M."/>
        </authorList>
    </citation>
    <scope>NUCLEOTIDE SEQUENCE [LARGE SCALE GENOMIC DNA]</scope>
    <source>
        <strain>ATCC 204508 / S288c</strain>
    </source>
</reference>
<reference key="2">
    <citation type="journal article" date="2014" name="G3 (Bethesda)">
        <title>The reference genome sequence of Saccharomyces cerevisiae: Then and now.</title>
        <authorList>
            <person name="Engel S.R."/>
            <person name="Dietrich F.S."/>
            <person name="Fisk D.G."/>
            <person name="Binkley G."/>
            <person name="Balakrishnan R."/>
            <person name="Costanzo M.C."/>
            <person name="Dwight S.S."/>
            <person name="Hitz B.C."/>
            <person name="Karra K."/>
            <person name="Nash R.S."/>
            <person name="Weng S."/>
            <person name="Wong E.D."/>
            <person name="Lloyd P."/>
            <person name="Skrzypek M.S."/>
            <person name="Miyasato S.R."/>
            <person name="Simison M."/>
            <person name="Cherry J.M."/>
        </authorList>
    </citation>
    <scope>GENOME REANNOTATION</scope>
    <source>
        <strain>ATCC 204508 / S288c</strain>
    </source>
</reference>
<reference key="3">
    <citation type="journal article" date="2007" name="Genome Res.">
        <title>Approaching a complete repository of sequence-verified protein-encoding clones for Saccharomyces cerevisiae.</title>
        <authorList>
            <person name="Hu Y."/>
            <person name="Rolfs A."/>
            <person name="Bhullar B."/>
            <person name="Murthy T.V.S."/>
            <person name="Zhu C."/>
            <person name="Berger M.F."/>
            <person name="Camargo A.A."/>
            <person name="Kelley F."/>
            <person name="McCarron S."/>
            <person name="Jepson D."/>
            <person name="Richardson A."/>
            <person name="Raphael J."/>
            <person name="Moreira D."/>
            <person name="Taycher E."/>
            <person name="Zuo D."/>
            <person name="Mohr S."/>
            <person name="Kane M.F."/>
            <person name="Williamson J."/>
            <person name="Simpson A.J.G."/>
            <person name="Bulyk M.L."/>
            <person name="Harlow E."/>
            <person name="Marsischky G."/>
            <person name="Kolodner R.D."/>
            <person name="LaBaer J."/>
        </authorList>
    </citation>
    <scope>NUCLEOTIDE SEQUENCE [GENOMIC DNA]</scope>
    <source>
        <strain>ATCC 204508 / S288c</strain>
    </source>
</reference>
<reference key="4">
    <citation type="journal article" date="2003" name="Nature">
        <title>Global analysis of protein localization in budding yeast.</title>
        <authorList>
            <person name="Huh W.-K."/>
            <person name="Falvo J.V."/>
            <person name="Gerke L.C."/>
            <person name="Carroll A.S."/>
            <person name="Howson R.W."/>
            <person name="Weissman J.S."/>
            <person name="O'Shea E.K."/>
        </authorList>
    </citation>
    <scope>SUBCELLULAR LOCATION [LARGE SCALE ANALYSIS]</scope>
</reference>
<reference key="5">
    <citation type="journal article" date="2003" name="Nature">
        <title>Global analysis of protein expression in yeast.</title>
        <authorList>
            <person name="Ghaemmaghami S."/>
            <person name="Huh W.-K."/>
            <person name="Bower K."/>
            <person name="Howson R.W."/>
            <person name="Belle A."/>
            <person name="Dephoure N."/>
            <person name="O'Shea E.K."/>
            <person name="Weissman J.S."/>
        </authorList>
    </citation>
    <scope>LEVEL OF PROTEIN EXPRESSION [LARGE SCALE ANALYSIS]</scope>
</reference>
<organism>
    <name type="scientific">Saccharomyces cerevisiae (strain ATCC 204508 / S288c)</name>
    <name type="common">Baker's yeast</name>
    <dbReference type="NCBI Taxonomy" id="559292"/>
    <lineage>
        <taxon>Eukaryota</taxon>
        <taxon>Fungi</taxon>
        <taxon>Dikarya</taxon>
        <taxon>Ascomycota</taxon>
        <taxon>Saccharomycotina</taxon>
        <taxon>Saccharomycetes</taxon>
        <taxon>Saccharomycetales</taxon>
        <taxon>Saccharomycetaceae</taxon>
        <taxon>Saccharomyces</taxon>
    </lineage>
</organism>
<protein>
    <recommendedName>
        <fullName>Serine--tRNA ligase, mitochondrial</fullName>
        <ecNumber evidence="1">6.1.1.11</ecNumber>
    </recommendedName>
    <alternativeName>
        <fullName>Digs into agar protein 4</fullName>
    </alternativeName>
    <alternativeName>
        <fullName>Seryl-tRNA synthetase</fullName>
        <shortName>SerRS</shortName>
    </alternativeName>
    <alternativeName>
        <fullName evidence="4">Seryl-tRNA(Ser) synthetase</fullName>
    </alternativeName>
</protein>
<sequence length="446" mass="50390">MIIRRLFSISNRSFFLKKPQFDVKKIIEMIPQYQTSIQNRELIEADSIIRSLQLLGERYQNIKEIDKVIADIQIQRKSIEAQIKKDKTKITEYSAALKALKEQYNDQNSKSSELKKKILETCKSLPNTLDPTVPLDAPQIEQWINPLKTHKTSEAQAHVDIMLKKNMLDLQTASNVTGMSWYYLLNDGARLEQALVAYALKKANENGFSSCVPPSITKKELIDACGFNPRDMNNERQIYALQDTNLGLVATAEIPLAGLGANKVLELNSGECSKKLVGVSRCYRAEAGARGKDTKGLYRVHEFTKVELFCWSKPETSAKVLEEIKQFQISVVEELGIPAKVLNMPSNDLGNPAFKKYDIEAWMPGRGKFGEISSASNCTDFQSRRLNTKYRDDNTGKLEYVHTLNGTAMAIPRVIVALVENFYDPSTGKISVPECLREFMNGQRYI</sequence>